<reference key="1">
    <citation type="journal article" date="2005" name="Jpn. Agric. Res. Q.">
        <title>Genome sequence of Xanthomonas oryzae pv. oryzae suggests contribution of large numbers of effector genes and insertion sequences to its race diversity.</title>
        <authorList>
            <person name="Ochiai H."/>
            <person name="Inoue Y."/>
            <person name="Takeya M."/>
            <person name="Sasaki A."/>
            <person name="Kaku H."/>
        </authorList>
    </citation>
    <scope>NUCLEOTIDE SEQUENCE [LARGE SCALE GENOMIC DNA]</scope>
    <source>
        <strain>MAFF 311018</strain>
    </source>
</reference>
<name>GLO2_XANOM</name>
<organism>
    <name type="scientific">Xanthomonas oryzae pv. oryzae (strain MAFF 311018)</name>
    <dbReference type="NCBI Taxonomy" id="342109"/>
    <lineage>
        <taxon>Bacteria</taxon>
        <taxon>Pseudomonadati</taxon>
        <taxon>Pseudomonadota</taxon>
        <taxon>Gammaproteobacteria</taxon>
        <taxon>Lysobacterales</taxon>
        <taxon>Lysobacteraceae</taxon>
        <taxon>Xanthomonas</taxon>
    </lineage>
</organism>
<feature type="chain" id="PRO_1000068233" description="Hydroxyacylglutathione hydrolase">
    <location>
        <begin position="1"/>
        <end position="255"/>
    </location>
</feature>
<feature type="binding site" evidence="1">
    <location>
        <position position="53"/>
    </location>
    <ligand>
        <name>Zn(2+)</name>
        <dbReference type="ChEBI" id="CHEBI:29105"/>
        <label>1</label>
    </ligand>
</feature>
<feature type="binding site" evidence="1">
    <location>
        <position position="55"/>
    </location>
    <ligand>
        <name>Zn(2+)</name>
        <dbReference type="ChEBI" id="CHEBI:29105"/>
        <label>1</label>
    </ligand>
</feature>
<feature type="binding site" evidence="1">
    <location>
        <position position="57"/>
    </location>
    <ligand>
        <name>Zn(2+)</name>
        <dbReference type="ChEBI" id="CHEBI:29105"/>
        <label>2</label>
    </ligand>
</feature>
<feature type="binding site" evidence="1">
    <location>
        <position position="58"/>
    </location>
    <ligand>
        <name>Zn(2+)</name>
        <dbReference type="ChEBI" id="CHEBI:29105"/>
        <label>2</label>
    </ligand>
</feature>
<feature type="binding site" evidence="1">
    <location>
        <position position="110"/>
    </location>
    <ligand>
        <name>Zn(2+)</name>
        <dbReference type="ChEBI" id="CHEBI:29105"/>
        <label>1</label>
    </ligand>
</feature>
<feature type="binding site" evidence="1">
    <location>
        <position position="127"/>
    </location>
    <ligand>
        <name>Zn(2+)</name>
        <dbReference type="ChEBI" id="CHEBI:29105"/>
        <label>1</label>
    </ligand>
</feature>
<feature type="binding site" evidence="1">
    <location>
        <position position="127"/>
    </location>
    <ligand>
        <name>Zn(2+)</name>
        <dbReference type="ChEBI" id="CHEBI:29105"/>
        <label>2</label>
    </ligand>
</feature>
<feature type="binding site" evidence="1">
    <location>
        <position position="165"/>
    </location>
    <ligand>
        <name>Zn(2+)</name>
        <dbReference type="ChEBI" id="CHEBI:29105"/>
        <label>2</label>
    </ligand>
</feature>
<gene>
    <name evidence="1" type="primary">gloB</name>
    <name type="ordered locus">XOO0938</name>
</gene>
<dbReference type="EC" id="3.1.2.6" evidence="1"/>
<dbReference type="EMBL" id="AP008229">
    <property type="protein sequence ID" value="BAE67693.1"/>
    <property type="molecule type" value="Genomic_DNA"/>
</dbReference>
<dbReference type="RefSeq" id="WP_011257886.1">
    <property type="nucleotide sequence ID" value="NC_007705.1"/>
</dbReference>
<dbReference type="SMR" id="Q2P6Y4"/>
<dbReference type="KEGG" id="xom:XOO0938"/>
<dbReference type="HOGENOM" id="CLU_030571_4_1_6"/>
<dbReference type="UniPathway" id="UPA00619">
    <property type="reaction ID" value="UER00676"/>
</dbReference>
<dbReference type="GO" id="GO:0004416">
    <property type="term" value="F:hydroxyacylglutathione hydrolase activity"/>
    <property type="evidence" value="ECO:0007669"/>
    <property type="project" value="UniProtKB-UniRule"/>
</dbReference>
<dbReference type="GO" id="GO:0046872">
    <property type="term" value="F:metal ion binding"/>
    <property type="evidence" value="ECO:0007669"/>
    <property type="project" value="UniProtKB-KW"/>
</dbReference>
<dbReference type="GO" id="GO:0019243">
    <property type="term" value="P:methylglyoxal catabolic process to D-lactate via S-lactoyl-glutathione"/>
    <property type="evidence" value="ECO:0007669"/>
    <property type="project" value="InterPro"/>
</dbReference>
<dbReference type="CDD" id="cd07723">
    <property type="entry name" value="hydroxyacylglutathione_hydrolase_MBL-fold"/>
    <property type="match status" value="1"/>
</dbReference>
<dbReference type="Gene3D" id="3.60.15.10">
    <property type="entry name" value="Ribonuclease Z/Hydroxyacylglutathione hydrolase-like"/>
    <property type="match status" value="1"/>
</dbReference>
<dbReference type="HAMAP" id="MF_01374">
    <property type="entry name" value="Glyoxalase_2"/>
    <property type="match status" value="1"/>
</dbReference>
<dbReference type="InterPro" id="IPR035680">
    <property type="entry name" value="Clx_II_MBL"/>
</dbReference>
<dbReference type="InterPro" id="IPR050110">
    <property type="entry name" value="Glyoxalase_II_hydrolase"/>
</dbReference>
<dbReference type="InterPro" id="IPR032282">
    <property type="entry name" value="HAGH_C"/>
</dbReference>
<dbReference type="InterPro" id="IPR017782">
    <property type="entry name" value="Hydroxyacylglutathione_Hdrlase"/>
</dbReference>
<dbReference type="InterPro" id="IPR001279">
    <property type="entry name" value="Metallo-B-lactamas"/>
</dbReference>
<dbReference type="InterPro" id="IPR036866">
    <property type="entry name" value="RibonucZ/Hydroxyglut_hydro"/>
</dbReference>
<dbReference type="NCBIfam" id="TIGR03413">
    <property type="entry name" value="GSH_gloB"/>
    <property type="match status" value="1"/>
</dbReference>
<dbReference type="PANTHER" id="PTHR43705">
    <property type="entry name" value="HYDROXYACYLGLUTATHIONE HYDROLASE"/>
    <property type="match status" value="1"/>
</dbReference>
<dbReference type="PANTHER" id="PTHR43705:SF1">
    <property type="entry name" value="HYDROXYACYLGLUTATHIONE HYDROLASE GLOB"/>
    <property type="match status" value="1"/>
</dbReference>
<dbReference type="Pfam" id="PF16123">
    <property type="entry name" value="HAGH_C"/>
    <property type="match status" value="1"/>
</dbReference>
<dbReference type="Pfam" id="PF00753">
    <property type="entry name" value="Lactamase_B"/>
    <property type="match status" value="1"/>
</dbReference>
<dbReference type="PIRSF" id="PIRSF005457">
    <property type="entry name" value="Glx"/>
    <property type="match status" value="1"/>
</dbReference>
<dbReference type="SMART" id="SM00849">
    <property type="entry name" value="Lactamase_B"/>
    <property type="match status" value="1"/>
</dbReference>
<dbReference type="SUPFAM" id="SSF56281">
    <property type="entry name" value="Metallo-hydrolase/oxidoreductase"/>
    <property type="match status" value="1"/>
</dbReference>
<protein>
    <recommendedName>
        <fullName evidence="1">Hydroxyacylglutathione hydrolase</fullName>
        <ecNumber evidence="1">3.1.2.6</ecNumber>
    </recommendedName>
    <alternativeName>
        <fullName evidence="1">Glyoxalase II</fullName>
        <shortName evidence="1">Glx II</shortName>
    </alternativeName>
</protein>
<sequence>MRLIALPAFDDNYIWALVAADGRAIIVDPGQAAPVIATAEREGLVPSAILLTHHHGDHIDGVAELQQRWPGLELFSPADERIPTTAHHVSHGERLSLLAVDFQVIEVPGHTRTHIAFVTDRHLFSGDTLFSLGCGRMFEGTAPQMFDSLQRLACLPGETLVCCGHEYTLANAAFALHVDSTNAALQRRQQEAQAMRHAARPTLPISLKSELATNPFLRTNRPEIRAVVAARAAGALSSEVDVFAELRRWKDEFCL</sequence>
<evidence type="ECO:0000255" key="1">
    <source>
        <dbReference type="HAMAP-Rule" id="MF_01374"/>
    </source>
</evidence>
<comment type="function">
    <text evidence="1">Thiolesterase that catalyzes the hydrolysis of S-D-lactoyl-glutathione to form glutathione and D-lactic acid.</text>
</comment>
<comment type="catalytic activity">
    <reaction evidence="1">
        <text>an S-(2-hydroxyacyl)glutathione + H2O = a 2-hydroxy carboxylate + glutathione + H(+)</text>
        <dbReference type="Rhea" id="RHEA:21864"/>
        <dbReference type="ChEBI" id="CHEBI:15377"/>
        <dbReference type="ChEBI" id="CHEBI:15378"/>
        <dbReference type="ChEBI" id="CHEBI:57925"/>
        <dbReference type="ChEBI" id="CHEBI:58896"/>
        <dbReference type="ChEBI" id="CHEBI:71261"/>
        <dbReference type="EC" id="3.1.2.6"/>
    </reaction>
</comment>
<comment type="cofactor">
    <cofactor evidence="1">
        <name>Zn(2+)</name>
        <dbReference type="ChEBI" id="CHEBI:29105"/>
    </cofactor>
    <text evidence="1">Binds 2 Zn(2+) ions per subunit.</text>
</comment>
<comment type="pathway">
    <text evidence="1">Secondary metabolite metabolism; methylglyoxal degradation; (R)-lactate from methylglyoxal: step 2/2.</text>
</comment>
<comment type="subunit">
    <text evidence="1">Monomer.</text>
</comment>
<comment type="similarity">
    <text evidence="1">Belongs to the metallo-beta-lactamase superfamily. Glyoxalase II family.</text>
</comment>
<accession>Q2P6Y4</accession>
<keyword id="KW-0378">Hydrolase</keyword>
<keyword id="KW-0479">Metal-binding</keyword>
<keyword id="KW-0862">Zinc</keyword>
<proteinExistence type="inferred from homology"/>